<protein>
    <recommendedName>
        <fullName evidence="1 4">Lipoyl synthase 2</fullName>
        <ecNumber evidence="1">2.8.1.8</ecNumber>
    </recommendedName>
    <alternativeName>
        <fullName evidence="1">Lip-syn 2</fullName>
        <shortName evidence="1">LS 2</shortName>
    </alternativeName>
    <alternativeName>
        <fullName evidence="1">Lipoate synthase 2</fullName>
    </alternativeName>
    <alternativeName>
        <fullName evidence="1">Lipoic acid synthase 2</fullName>
    </alternativeName>
    <alternativeName>
        <fullName evidence="1">Sulfur insertion protein LipA 2</fullName>
    </alternativeName>
</protein>
<evidence type="ECO:0000255" key="1">
    <source>
        <dbReference type="HAMAP-Rule" id="MF_00206"/>
    </source>
</evidence>
<evidence type="ECO:0000255" key="2">
    <source>
        <dbReference type="PROSITE-ProRule" id="PRU01266"/>
    </source>
</evidence>
<evidence type="ECO:0000269" key="3">
    <source>
    </source>
</evidence>
<evidence type="ECO:0000303" key="4">
    <source>
    </source>
</evidence>
<evidence type="ECO:0007744" key="5">
    <source>
        <dbReference type="PDB" id="4U0O"/>
    </source>
</evidence>
<evidence type="ECO:0007744" key="6">
    <source>
        <dbReference type="PDB" id="4U0P"/>
    </source>
</evidence>
<evidence type="ECO:0007829" key="7">
    <source>
        <dbReference type="PDB" id="4U0O"/>
    </source>
</evidence>
<evidence type="ECO:0007829" key="8">
    <source>
        <dbReference type="PDB" id="4U0P"/>
    </source>
</evidence>
<keyword id="KW-0002">3D-structure</keyword>
<keyword id="KW-0004">4Fe-4S</keyword>
<keyword id="KW-0963">Cytoplasm</keyword>
<keyword id="KW-0408">Iron</keyword>
<keyword id="KW-0411">Iron-sulfur</keyword>
<keyword id="KW-0479">Metal-binding</keyword>
<keyword id="KW-1185">Reference proteome</keyword>
<keyword id="KW-0949">S-adenosyl-L-methionine</keyword>
<keyword id="KW-0808">Transferase</keyword>
<organism>
    <name type="scientific">Thermosynechococcus vestitus (strain NIES-2133 / IAM M-273 / BP-1)</name>
    <dbReference type="NCBI Taxonomy" id="197221"/>
    <lineage>
        <taxon>Bacteria</taxon>
        <taxon>Bacillati</taxon>
        <taxon>Cyanobacteriota</taxon>
        <taxon>Cyanophyceae</taxon>
        <taxon>Acaryochloridales</taxon>
        <taxon>Thermosynechococcaceae</taxon>
        <taxon>Thermosynechococcus</taxon>
    </lineage>
</organism>
<accession>Q8DLC2</accession>
<proteinExistence type="evidence at protein level"/>
<dbReference type="EC" id="2.8.1.8" evidence="1"/>
<dbReference type="EMBL" id="BA000039">
    <property type="protein sequence ID" value="BAC08126.1"/>
    <property type="molecule type" value="Genomic_DNA"/>
</dbReference>
<dbReference type="RefSeq" id="NP_681364.1">
    <property type="nucleotide sequence ID" value="NC_004113.1"/>
</dbReference>
<dbReference type="RefSeq" id="WP_011056422.1">
    <property type="nucleotide sequence ID" value="NC_004113.1"/>
</dbReference>
<dbReference type="PDB" id="4U0O">
    <property type="method" value="X-ray"/>
    <property type="resolution" value="1.60 A"/>
    <property type="chains" value="B=1-290"/>
</dbReference>
<dbReference type="PDB" id="4U0P">
    <property type="method" value="X-ray"/>
    <property type="resolution" value="1.62 A"/>
    <property type="chains" value="B=1-290"/>
</dbReference>
<dbReference type="PDBsum" id="4U0O"/>
<dbReference type="PDBsum" id="4U0P"/>
<dbReference type="SMR" id="Q8DLC2"/>
<dbReference type="STRING" id="197221.gene:10747164"/>
<dbReference type="EnsemblBacteria" id="BAC08126">
    <property type="protein sequence ID" value="BAC08126"/>
    <property type="gene ID" value="BAC08126"/>
</dbReference>
<dbReference type="KEGG" id="tel:tll0574"/>
<dbReference type="PATRIC" id="fig|197221.4.peg.606"/>
<dbReference type="eggNOG" id="COG0320">
    <property type="taxonomic scope" value="Bacteria"/>
</dbReference>
<dbReference type="UniPathway" id="UPA00538">
    <property type="reaction ID" value="UER00593"/>
</dbReference>
<dbReference type="EvolutionaryTrace" id="Q8DLC2"/>
<dbReference type="Proteomes" id="UP000000440">
    <property type="component" value="Chromosome"/>
</dbReference>
<dbReference type="GO" id="GO:0005737">
    <property type="term" value="C:cytoplasm"/>
    <property type="evidence" value="ECO:0007669"/>
    <property type="project" value="UniProtKB-SubCell"/>
</dbReference>
<dbReference type="GO" id="GO:0051539">
    <property type="term" value="F:4 iron, 4 sulfur cluster binding"/>
    <property type="evidence" value="ECO:0007669"/>
    <property type="project" value="UniProtKB-UniRule"/>
</dbReference>
<dbReference type="GO" id="GO:0016992">
    <property type="term" value="F:lipoate synthase activity"/>
    <property type="evidence" value="ECO:0007669"/>
    <property type="project" value="UniProtKB-UniRule"/>
</dbReference>
<dbReference type="GO" id="GO:0046872">
    <property type="term" value="F:metal ion binding"/>
    <property type="evidence" value="ECO:0007669"/>
    <property type="project" value="UniProtKB-KW"/>
</dbReference>
<dbReference type="CDD" id="cd01335">
    <property type="entry name" value="Radical_SAM"/>
    <property type="match status" value="1"/>
</dbReference>
<dbReference type="Gene3D" id="3.20.20.70">
    <property type="entry name" value="Aldolase class I"/>
    <property type="match status" value="1"/>
</dbReference>
<dbReference type="HAMAP" id="MF_00206">
    <property type="entry name" value="Lipoyl_synth"/>
    <property type="match status" value="1"/>
</dbReference>
<dbReference type="InterPro" id="IPR013785">
    <property type="entry name" value="Aldolase_TIM"/>
</dbReference>
<dbReference type="InterPro" id="IPR006638">
    <property type="entry name" value="Elp3/MiaA/NifB-like_rSAM"/>
</dbReference>
<dbReference type="InterPro" id="IPR003698">
    <property type="entry name" value="Lipoyl_synth"/>
</dbReference>
<dbReference type="InterPro" id="IPR007197">
    <property type="entry name" value="rSAM"/>
</dbReference>
<dbReference type="NCBIfam" id="TIGR00510">
    <property type="entry name" value="lipA"/>
    <property type="match status" value="1"/>
</dbReference>
<dbReference type="NCBIfam" id="NF004019">
    <property type="entry name" value="PRK05481.1"/>
    <property type="match status" value="1"/>
</dbReference>
<dbReference type="NCBIfam" id="NF009544">
    <property type="entry name" value="PRK12928.1"/>
    <property type="match status" value="1"/>
</dbReference>
<dbReference type="PANTHER" id="PTHR10949">
    <property type="entry name" value="LIPOYL SYNTHASE"/>
    <property type="match status" value="1"/>
</dbReference>
<dbReference type="PANTHER" id="PTHR10949:SF0">
    <property type="entry name" value="LIPOYL SYNTHASE, MITOCHONDRIAL"/>
    <property type="match status" value="1"/>
</dbReference>
<dbReference type="Pfam" id="PF04055">
    <property type="entry name" value="Radical_SAM"/>
    <property type="match status" value="1"/>
</dbReference>
<dbReference type="PIRSF" id="PIRSF005963">
    <property type="entry name" value="Lipoyl_synth"/>
    <property type="match status" value="1"/>
</dbReference>
<dbReference type="SFLD" id="SFLDF00271">
    <property type="entry name" value="lipoyl_synthase"/>
    <property type="match status" value="1"/>
</dbReference>
<dbReference type="SFLD" id="SFLDG01058">
    <property type="entry name" value="lipoyl_synthase_like"/>
    <property type="match status" value="1"/>
</dbReference>
<dbReference type="SMART" id="SM00729">
    <property type="entry name" value="Elp3"/>
    <property type="match status" value="1"/>
</dbReference>
<dbReference type="SUPFAM" id="SSF102114">
    <property type="entry name" value="Radical SAM enzymes"/>
    <property type="match status" value="1"/>
</dbReference>
<dbReference type="PROSITE" id="PS51918">
    <property type="entry name" value="RADICAL_SAM"/>
    <property type="match status" value="1"/>
</dbReference>
<feature type="chain" id="PRO_0000102367" description="Lipoyl synthase 2">
    <location>
        <begin position="1"/>
        <end position="290"/>
    </location>
</feature>
<feature type="domain" description="Radical SAM core" evidence="2">
    <location>
        <begin position="49"/>
        <end position="272"/>
    </location>
</feature>
<feature type="binding site" evidence="1 3 5 6">
    <location>
        <position position="37"/>
    </location>
    <ligand>
        <name>[4Fe-4S] cluster</name>
        <dbReference type="ChEBI" id="CHEBI:49883"/>
        <label>1</label>
    </ligand>
</feature>
<feature type="binding site" evidence="1 3 5 6">
    <location>
        <position position="42"/>
    </location>
    <ligand>
        <name>[4Fe-4S] cluster</name>
        <dbReference type="ChEBI" id="CHEBI:49883"/>
        <label>1</label>
    </ligand>
</feature>
<feature type="binding site" evidence="1 3 5 6">
    <location>
        <position position="48"/>
    </location>
    <ligand>
        <name>[4Fe-4S] cluster</name>
        <dbReference type="ChEBI" id="CHEBI:49883"/>
        <label>1</label>
    </ligand>
</feature>
<feature type="binding site" evidence="1 3 5 6">
    <location>
        <position position="63"/>
    </location>
    <ligand>
        <name>[4Fe-4S] cluster</name>
        <dbReference type="ChEBI" id="CHEBI:49883"/>
        <label>2</label>
        <note>4Fe-4S-S-AdoMet</note>
    </ligand>
</feature>
<feature type="binding site" evidence="1 3 5 6">
    <location>
        <position position="67"/>
    </location>
    <ligand>
        <name>[4Fe-4S] cluster</name>
        <dbReference type="ChEBI" id="CHEBI:49883"/>
        <label>2</label>
        <note>4Fe-4S-S-AdoMet</note>
    </ligand>
</feature>
<feature type="binding site" evidence="1 3 5 6">
    <location>
        <position position="70"/>
    </location>
    <ligand>
        <name>[4Fe-4S] cluster</name>
        <dbReference type="ChEBI" id="CHEBI:49883"/>
        <label>2</label>
        <note>4Fe-4S-S-AdoMet</note>
    </ligand>
</feature>
<feature type="binding site" evidence="1 3 5">
    <location>
        <position position="283"/>
    </location>
    <ligand>
        <name>[4Fe-4S] cluster</name>
        <dbReference type="ChEBI" id="CHEBI:49883"/>
        <label>1</label>
    </ligand>
</feature>
<feature type="helix" evidence="8">
    <location>
        <begin position="9"/>
        <end position="16"/>
    </location>
</feature>
<feature type="helix" evidence="7">
    <location>
        <begin position="23"/>
        <end position="31"/>
    </location>
</feature>
<feature type="turn" evidence="7">
    <location>
        <begin position="37"/>
        <end position="39"/>
    </location>
</feature>
<feature type="turn" evidence="7">
    <location>
        <begin position="43"/>
        <end position="48"/>
    </location>
</feature>
<feature type="helix" evidence="7">
    <location>
        <begin position="49"/>
        <end position="51"/>
    </location>
</feature>
<feature type="strand" evidence="7">
    <location>
        <begin position="53"/>
        <end position="59"/>
    </location>
</feature>
<feature type="strand" evidence="8">
    <location>
        <begin position="61"/>
        <end position="65"/>
    </location>
</feature>
<feature type="strand" evidence="8">
    <location>
        <begin position="72"/>
        <end position="74"/>
    </location>
</feature>
<feature type="helix" evidence="7">
    <location>
        <begin position="85"/>
        <end position="96"/>
    </location>
</feature>
<feature type="strand" evidence="7">
    <location>
        <begin position="99"/>
        <end position="105"/>
    </location>
</feature>
<feature type="turn" evidence="7">
    <location>
        <begin position="112"/>
        <end position="115"/>
    </location>
</feature>
<feature type="helix" evidence="7">
    <location>
        <begin position="116"/>
        <end position="129"/>
    </location>
</feature>
<feature type="strand" evidence="7">
    <location>
        <begin position="134"/>
        <end position="138"/>
    </location>
</feature>
<feature type="helix" evidence="7">
    <location>
        <begin position="151"/>
        <end position="159"/>
    </location>
</feature>
<feature type="strand" evidence="7">
    <location>
        <begin position="164"/>
        <end position="167"/>
    </location>
</feature>
<feature type="helix" evidence="7">
    <location>
        <begin position="174"/>
        <end position="176"/>
    </location>
</feature>
<feature type="helix" evidence="7">
    <location>
        <begin position="177"/>
        <end position="180"/>
    </location>
</feature>
<feature type="helix" evidence="7">
    <location>
        <begin position="186"/>
        <end position="199"/>
    </location>
</feature>
<feature type="strand" evidence="7">
    <location>
        <begin position="205"/>
        <end position="211"/>
    </location>
</feature>
<feature type="helix" evidence="7">
    <location>
        <begin position="217"/>
        <end position="229"/>
    </location>
</feature>
<feature type="strand" evidence="7">
    <location>
        <begin position="234"/>
        <end position="239"/>
    </location>
</feature>
<feature type="helix" evidence="7">
    <location>
        <begin position="256"/>
        <end position="269"/>
    </location>
</feature>
<feature type="strand" evidence="7">
    <location>
        <begin position="272"/>
        <end position="277"/>
    </location>
</feature>
<feature type="turn" evidence="7">
    <location>
        <begin position="282"/>
        <end position="287"/>
    </location>
</feature>
<reference key="1">
    <citation type="journal article" date="2002" name="DNA Res.">
        <title>Complete genome structure of the thermophilic cyanobacterium Thermosynechococcus elongatus BP-1.</title>
        <authorList>
            <person name="Nakamura Y."/>
            <person name="Kaneko T."/>
            <person name="Sato S."/>
            <person name="Ikeuchi M."/>
            <person name="Katoh H."/>
            <person name="Sasamoto S."/>
            <person name="Watanabe A."/>
            <person name="Iriguchi M."/>
            <person name="Kawashima K."/>
            <person name="Kimura T."/>
            <person name="Kishida Y."/>
            <person name="Kiyokawa C."/>
            <person name="Kohara M."/>
            <person name="Matsumoto M."/>
            <person name="Matsuno A."/>
            <person name="Nakazaki N."/>
            <person name="Shimpo S."/>
            <person name="Sugimoto M."/>
            <person name="Takeuchi C."/>
            <person name="Yamada M."/>
            <person name="Tabata S."/>
        </authorList>
    </citation>
    <scope>NUCLEOTIDE SEQUENCE [LARGE SCALE GENOMIC DNA]</scope>
    <source>
        <strain>NIES-2133 / IAM M-273 / BP-1</strain>
    </source>
</reference>
<reference evidence="5 6" key="2">
    <citation type="journal article" date="2014" name="Biochem. J.">
        <title>Structures of lipoyl synthase reveal a compact active site for controlling sequential sulfur insertion reactions.</title>
        <authorList>
            <person name="Harmer J.E."/>
            <person name="Hiscox M.J."/>
            <person name="Dinis P.C."/>
            <person name="Fox S.J."/>
            <person name="Iliopoulos A."/>
            <person name="Hussey J.E."/>
            <person name="Sandy J."/>
            <person name="Van Beek F.T."/>
            <person name="Essex J.W."/>
            <person name="Roach P.L."/>
        </authorList>
    </citation>
    <scope>X-RAY CRYSTALLOGRAPHY (1.60 ANGSTROMS) IN COMPLEXES WITH IRON-SULFUR (4FE-4S) AND S-ADENOSYL-L-HOMOCYSTEINE</scope>
    <scope>COFACTOR</scope>
</reference>
<name>LIPA2_THEVB</name>
<sequence length="290" mass="31735">MALSRPLPSWLRKPLGKASEISTVQRLVRQYGIHTICEEGRCPNRGECYGQKTATFLLLGPTCTRACAFCQVEKGHAPAAVDPEEPTKIAAAVATLGLRYVVLTSVARDDLPDQGAGQFVATMAAIRQRCPGTEIEVLSPDFRMDRGRLSQRDCIAQIVAAQPACYNHNLETVRRLQGPVRRGATYESSLRVLATVKELNPDIPTKSGLMLGLGETEAEIIETLKDLRRVGCDRLTLGQYLPPSLSHLPVVKYWTPEEFNTLGNIARELGFSHVRSGPLVRSSYHAAEGG</sequence>
<comment type="function">
    <text evidence="1">Catalyzes the radical-mediated insertion of two sulfur atoms into the C-6 and C-8 positions of the octanoyl moiety bound to the lipoyl domains of lipoate-dependent enzymes, thereby converting the octanoylated domains into lipoylated derivatives.</text>
</comment>
<comment type="catalytic activity">
    <reaction evidence="1">
        <text>[[Fe-S] cluster scaffold protein carrying a second [4Fe-4S](2+) cluster] + N(6)-octanoyl-L-lysyl-[protein] + 2 oxidized [2Fe-2S]-[ferredoxin] + 2 S-adenosyl-L-methionine + 4 H(+) = [[Fe-S] cluster scaffold protein] + N(6)-[(R)-dihydrolipoyl]-L-lysyl-[protein] + 4 Fe(3+) + 2 hydrogen sulfide + 2 5'-deoxyadenosine + 2 L-methionine + 2 reduced [2Fe-2S]-[ferredoxin]</text>
        <dbReference type="Rhea" id="RHEA:16585"/>
        <dbReference type="Rhea" id="RHEA-COMP:9928"/>
        <dbReference type="Rhea" id="RHEA-COMP:10000"/>
        <dbReference type="Rhea" id="RHEA-COMP:10001"/>
        <dbReference type="Rhea" id="RHEA-COMP:10475"/>
        <dbReference type="Rhea" id="RHEA-COMP:14568"/>
        <dbReference type="Rhea" id="RHEA-COMP:14569"/>
        <dbReference type="ChEBI" id="CHEBI:15378"/>
        <dbReference type="ChEBI" id="CHEBI:17319"/>
        <dbReference type="ChEBI" id="CHEBI:29034"/>
        <dbReference type="ChEBI" id="CHEBI:29919"/>
        <dbReference type="ChEBI" id="CHEBI:33722"/>
        <dbReference type="ChEBI" id="CHEBI:33737"/>
        <dbReference type="ChEBI" id="CHEBI:33738"/>
        <dbReference type="ChEBI" id="CHEBI:57844"/>
        <dbReference type="ChEBI" id="CHEBI:59789"/>
        <dbReference type="ChEBI" id="CHEBI:78809"/>
        <dbReference type="ChEBI" id="CHEBI:83100"/>
        <dbReference type="EC" id="2.8.1.8"/>
    </reaction>
</comment>
<comment type="cofactor">
    <cofactor evidence="1 3">
        <name>[4Fe-4S] cluster</name>
        <dbReference type="ChEBI" id="CHEBI:49883"/>
    </cofactor>
    <text evidence="1 3">Binds 2 [4Fe-4S] clusters per subunit. One cluster is coordinated with 3 cysteines and an exchangeable S-adenosyl-L-methionine.</text>
</comment>
<comment type="pathway">
    <text evidence="1">Protein modification; protein lipoylation via endogenous pathway; protein N(6)-(lipoyl)lysine from octanoyl-[acyl-carrier-protein]: step 2/2.</text>
</comment>
<comment type="subcellular location">
    <subcellularLocation>
        <location evidence="1">Cytoplasm</location>
    </subcellularLocation>
</comment>
<comment type="similarity">
    <text evidence="1">Belongs to the radical SAM superfamily. Lipoyl synthase family.</text>
</comment>
<gene>
    <name evidence="1 4" type="primary">lipA2</name>
    <name type="ordered locus">tll0574</name>
</gene>